<organism>
    <name type="scientific">Photobacterium profundum (strain SS9)</name>
    <dbReference type="NCBI Taxonomy" id="298386"/>
    <lineage>
        <taxon>Bacteria</taxon>
        <taxon>Pseudomonadati</taxon>
        <taxon>Pseudomonadota</taxon>
        <taxon>Gammaproteobacteria</taxon>
        <taxon>Vibrionales</taxon>
        <taxon>Vibrionaceae</taxon>
        <taxon>Photobacterium</taxon>
    </lineage>
</organism>
<gene>
    <name evidence="1" type="primary">rlmE</name>
    <name evidence="1" type="synonym">ftsJ</name>
    <name evidence="1" type="synonym">rrmJ</name>
    <name type="ordered locus">PBPRA0603</name>
</gene>
<feature type="chain" id="PRO_0000155518" description="Ribosomal RNA large subunit methyltransferase E">
    <location>
        <begin position="1"/>
        <end position="209"/>
    </location>
</feature>
<feature type="active site" description="Proton acceptor" evidence="1">
    <location>
        <position position="164"/>
    </location>
</feature>
<feature type="binding site" evidence="1">
    <location>
        <position position="63"/>
    </location>
    <ligand>
        <name>S-adenosyl-L-methionine</name>
        <dbReference type="ChEBI" id="CHEBI:59789"/>
    </ligand>
</feature>
<feature type="binding site" evidence="1">
    <location>
        <position position="65"/>
    </location>
    <ligand>
        <name>S-adenosyl-L-methionine</name>
        <dbReference type="ChEBI" id="CHEBI:59789"/>
    </ligand>
</feature>
<feature type="binding site" evidence="1">
    <location>
        <position position="83"/>
    </location>
    <ligand>
        <name>S-adenosyl-L-methionine</name>
        <dbReference type="ChEBI" id="CHEBI:59789"/>
    </ligand>
</feature>
<feature type="binding site" evidence="1">
    <location>
        <position position="99"/>
    </location>
    <ligand>
        <name>S-adenosyl-L-methionine</name>
        <dbReference type="ChEBI" id="CHEBI:59789"/>
    </ligand>
</feature>
<feature type="binding site" evidence="1">
    <location>
        <position position="124"/>
    </location>
    <ligand>
        <name>S-adenosyl-L-methionine</name>
        <dbReference type="ChEBI" id="CHEBI:59789"/>
    </ligand>
</feature>
<proteinExistence type="inferred from homology"/>
<keyword id="KW-0963">Cytoplasm</keyword>
<keyword id="KW-0489">Methyltransferase</keyword>
<keyword id="KW-1185">Reference proteome</keyword>
<keyword id="KW-0698">rRNA processing</keyword>
<keyword id="KW-0949">S-adenosyl-L-methionine</keyword>
<keyword id="KW-0808">Transferase</keyword>
<protein>
    <recommendedName>
        <fullName evidence="1">Ribosomal RNA large subunit methyltransferase E</fullName>
        <ecNumber evidence="1">2.1.1.166</ecNumber>
    </recommendedName>
    <alternativeName>
        <fullName evidence="1">23S rRNA Um2552 methyltransferase</fullName>
    </alternativeName>
    <alternativeName>
        <fullName evidence="1">rRNA (uridine-2'-O-)-methyltransferase</fullName>
    </alternativeName>
</protein>
<sequence length="209" mass="23363">MSRNKQSASSGRWLKEHFDDKYVQEAQKRGYRSRAIFKIEEIQKKDKLLKPGMTVVDLGAAPGGWSQYAAEVVGDEGQVIACDILSMDSLPGVSFLQGDFREEAVLSALLERIQPDMVDVVLSDMAPNMSGNLASDQPRAMYLVELALEMCKQVLAPNGSFAVKVFQGEGFDQYLAEIRNMFKVVKIRKPDSSRDRSREVYIVATGYKL</sequence>
<reference key="1">
    <citation type="journal article" date="2005" name="Science">
        <title>Life at depth: Photobacterium profundum genome sequence and expression analysis.</title>
        <authorList>
            <person name="Vezzi A."/>
            <person name="Campanaro S."/>
            <person name="D'Angelo M."/>
            <person name="Simonato F."/>
            <person name="Vitulo N."/>
            <person name="Lauro F.M."/>
            <person name="Cestaro A."/>
            <person name="Malacrida G."/>
            <person name="Simionati B."/>
            <person name="Cannata N."/>
            <person name="Romualdi C."/>
            <person name="Bartlett D.H."/>
            <person name="Valle G."/>
        </authorList>
    </citation>
    <scope>NUCLEOTIDE SEQUENCE [LARGE SCALE GENOMIC DNA]</scope>
    <source>
        <strain>ATCC BAA-1253 / SS9</strain>
    </source>
</reference>
<accession>Q6LUJ9</accession>
<dbReference type="EC" id="2.1.1.166" evidence="1"/>
<dbReference type="EMBL" id="CR378664">
    <property type="protein sequence ID" value="CAG19026.1"/>
    <property type="molecule type" value="Genomic_DNA"/>
</dbReference>
<dbReference type="RefSeq" id="WP_011217376.1">
    <property type="nucleotide sequence ID" value="NC_006370.1"/>
</dbReference>
<dbReference type="SMR" id="Q6LUJ9"/>
<dbReference type="STRING" id="298386.PBPRA0603"/>
<dbReference type="KEGG" id="ppr:PBPRA0603"/>
<dbReference type="eggNOG" id="COG0293">
    <property type="taxonomic scope" value="Bacteria"/>
</dbReference>
<dbReference type="HOGENOM" id="CLU_009422_4_0_6"/>
<dbReference type="Proteomes" id="UP000000593">
    <property type="component" value="Chromosome 1"/>
</dbReference>
<dbReference type="GO" id="GO:0005737">
    <property type="term" value="C:cytoplasm"/>
    <property type="evidence" value="ECO:0007669"/>
    <property type="project" value="UniProtKB-SubCell"/>
</dbReference>
<dbReference type="GO" id="GO:0008650">
    <property type="term" value="F:rRNA (uridine-2'-O-)-methyltransferase activity"/>
    <property type="evidence" value="ECO:0007669"/>
    <property type="project" value="UniProtKB-UniRule"/>
</dbReference>
<dbReference type="FunFam" id="3.40.50.150:FF:000005">
    <property type="entry name" value="Ribosomal RNA large subunit methyltransferase E"/>
    <property type="match status" value="1"/>
</dbReference>
<dbReference type="Gene3D" id="3.40.50.150">
    <property type="entry name" value="Vaccinia Virus protein VP39"/>
    <property type="match status" value="1"/>
</dbReference>
<dbReference type="HAMAP" id="MF_01547">
    <property type="entry name" value="RNA_methyltr_E"/>
    <property type="match status" value="1"/>
</dbReference>
<dbReference type="InterPro" id="IPR050082">
    <property type="entry name" value="RNA_methyltr_RlmE"/>
</dbReference>
<dbReference type="InterPro" id="IPR002877">
    <property type="entry name" value="RNA_MeTrfase_FtsJ_dom"/>
</dbReference>
<dbReference type="InterPro" id="IPR015507">
    <property type="entry name" value="rRNA-MeTfrase_E"/>
</dbReference>
<dbReference type="InterPro" id="IPR029063">
    <property type="entry name" value="SAM-dependent_MTases_sf"/>
</dbReference>
<dbReference type="NCBIfam" id="NF008390">
    <property type="entry name" value="PRK11188.1"/>
    <property type="match status" value="1"/>
</dbReference>
<dbReference type="PANTHER" id="PTHR10920">
    <property type="entry name" value="RIBOSOMAL RNA METHYLTRANSFERASE"/>
    <property type="match status" value="1"/>
</dbReference>
<dbReference type="PANTHER" id="PTHR10920:SF18">
    <property type="entry name" value="RRNA METHYLTRANSFERASE 2, MITOCHONDRIAL"/>
    <property type="match status" value="1"/>
</dbReference>
<dbReference type="Pfam" id="PF01728">
    <property type="entry name" value="FtsJ"/>
    <property type="match status" value="1"/>
</dbReference>
<dbReference type="PIRSF" id="PIRSF005461">
    <property type="entry name" value="23S_rRNA_mtase"/>
    <property type="match status" value="1"/>
</dbReference>
<dbReference type="SUPFAM" id="SSF53335">
    <property type="entry name" value="S-adenosyl-L-methionine-dependent methyltransferases"/>
    <property type="match status" value="1"/>
</dbReference>
<name>RLME_PHOPR</name>
<evidence type="ECO:0000255" key="1">
    <source>
        <dbReference type="HAMAP-Rule" id="MF_01547"/>
    </source>
</evidence>
<comment type="function">
    <text evidence="1">Specifically methylates the uridine in position 2552 of 23S rRNA at the 2'-O position of the ribose in the fully assembled 50S ribosomal subunit.</text>
</comment>
<comment type="catalytic activity">
    <reaction evidence="1">
        <text>uridine(2552) in 23S rRNA + S-adenosyl-L-methionine = 2'-O-methyluridine(2552) in 23S rRNA + S-adenosyl-L-homocysteine + H(+)</text>
        <dbReference type="Rhea" id="RHEA:42720"/>
        <dbReference type="Rhea" id="RHEA-COMP:10202"/>
        <dbReference type="Rhea" id="RHEA-COMP:10203"/>
        <dbReference type="ChEBI" id="CHEBI:15378"/>
        <dbReference type="ChEBI" id="CHEBI:57856"/>
        <dbReference type="ChEBI" id="CHEBI:59789"/>
        <dbReference type="ChEBI" id="CHEBI:65315"/>
        <dbReference type="ChEBI" id="CHEBI:74478"/>
        <dbReference type="EC" id="2.1.1.166"/>
    </reaction>
</comment>
<comment type="subcellular location">
    <subcellularLocation>
        <location evidence="1">Cytoplasm</location>
    </subcellularLocation>
</comment>
<comment type="similarity">
    <text evidence="1">Belongs to the class I-like SAM-binding methyltransferase superfamily. RNA methyltransferase RlmE family.</text>
</comment>